<keyword id="KW-0963">Cytoplasm</keyword>
<keyword id="KW-0378">Hydrolase</keyword>
<keyword id="KW-0479">Metal-binding</keyword>
<keyword id="KW-1185">Reference proteome</keyword>
<organism>
    <name type="scientific">Bacillus subtilis (strain 168)</name>
    <dbReference type="NCBI Taxonomy" id="224308"/>
    <lineage>
        <taxon>Bacteria</taxon>
        <taxon>Bacillati</taxon>
        <taxon>Bacillota</taxon>
        <taxon>Bacilli</taxon>
        <taxon>Bacillales</taxon>
        <taxon>Bacillaceae</taxon>
        <taxon>Bacillus</taxon>
    </lineage>
</organism>
<accession>O34940</accession>
<reference key="1">
    <citation type="journal article" date="1998" name="Microbiology">
        <title>The yvsA-yvqA (293 degrees - 289 degrees) region of the Bacillus subtilis chromosome containing genes involved in metal ion uptake and a putative sigma factor.</title>
        <authorList>
            <person name="Wipat A."/>
            <person name="Brignell C.S."/>
            <person name="Guy J.B."/>
            <person name="Rose M."/>
            <person name="Emmerson P.T."/>
            <person name="Harwood C.R."/>
        </authorList>
    </citation>
    <scope>NUCLEOTIDE SEQUENCE [GENOMIC DNA]</scope>
    <source>
        <strain>168</strain>
    </source>
</reference>
<reference key="2">
    <citation type="journal article" date="1997" name="Nature">
        <title>The complete genome sequence of the Gram-positive bacterium Bacillus subtilis.</title>
        <authorList>
            <person name="Kunst F."/>
            <person name="Ogasawara N."/>
            <person name="Moszer I."/>
            <person name="Albertini A.M."/>
            <person name="Alloni G."/>
            <person name="Azevedo V."/>
            <person name="Bertero M.G."/>
            <person name="Bessieres P."/>
            <person name="Bolotin A."/>
            <person name="Borchert S."/>
            <person name="Borriss R."/>
            <person name="Boursier L."/>
            <person name="Brans A."/>
            <person name="Braun M."/>
            <person name="Brignell S.C."/>
            <person name="Bron S."/>
            <person name="Brouillet S."/>
            <person name="Bruschi C.V."/>
            <person name="Caldwell B."/>
            <person name="Capuano V."/>
            <person name="Carter N.M."/>
            <person name="Choi S.-K."/>
            <person name="Codani J.-J."/>
            <person name="Connerton I.F."/>
            <person name="Cummings N.J."/>
            <person name="Daniel R.A."/>
            <person name="Denizot F."/>
            <person name="Devine K.M."/>
            <person name="Duesterhoeft A."/>
            <person name="Ehrlich S.D."/>
            <person name="Emmerson P.T."/>
            <person name="Entian K.-D."/>
            <person name="Errington J."/>
            <person name="Fabret C."/>
            <person name="Ferrari E."/>
            <person name="Foulger D."/>
            <person name="Fritz C."/>
            <person name="Fujita M."/>
            <person name="Fujita Y."/>
            <person name="Fuma S."/>
            <person name="Galizzi A."/>
            <person name="Galleron N."/>
            <person name="Ghim S.-Y."/>
            <person name="Glaser P."/>
            <person name="Goffeau A."/>
            <person name="Golightly E.J."/>
            <person name="Grandi G."/>
            <person name="Guiseppi G."/>
            <person name="Guy B.J."/>
            <person name="Haga K."/>
            <person name="Haiech J."/>
            <person name="Harwood C.R."/>
            <person name="Henaut A."/>
            <person name="Hilbert H."/>
            <person name="Holsappel S."/>
            <person name="Hosono S."/>
            <person name="Hullo M.-F."/>
            <person name="Itaya M."/>
            <person name="Jones L.-M."/>
            <person name="Joris B."/>
            <person name="Karamata D."/>
            <person name="Kasahara Y."/>
            <person name="Klaerr-Blanchard M."/>
            <person name="Klein C."/>
            <person name="Kobayashi Y."/>
            <person name="Koetter P."/>
            <person name="Koningstein G."/>
            <person name="Krogh S."/>
            <person name="Kumano M."/>
            <person name="Kurita K."/>
            <person name="Lapidus A."/>
            <person name="Lardinois S."/>
            <person name="Lauber J."/>
            <person name="Lazarevic V."/>
            <person name="Lee S.-M."/>
            <person name="Levine A."/>
            <person name="Liu H."/>
            <person name="Masuda S."/>
            <person name="Mauel C."/>
            <person name="Medigue C."/>
            <person name="Medina N."/>
            <person name="Mellado R.P."/>
            <person name="Mizuno M."/>
            <person name="Moestl D."/>
            <person name="Nakai S."/>
            <person name="Noback M."/>
            <person name="Noone D."/>
            <person name="O'Reilly M."/>
            <person name="Ogawa K."/>
            <person name="Ogiwara A."/>
            <person name="Oudega B."/>
            <person name="Park S.-H."/>
            <person name="Parro V."/>
            <person name="Pohl T.M."/>
            <person name="Portetelle D."/>
            <person name="Porwollik S."/>
            <person name="Prescott A.M."/>
            <person name="Presecan E."/>
            <person name="Pujic P."/>
            <person name="Purnelle B."/>
            <person name="Rapoport G."/>
            <person name="Rey M."/>
            <person name="Reynolds S."/>
            <person name="Rieger M."/>
            <person name="Rivolta C."/>
            <person name="Rocha E."/>
            <person name="Roche B."/>
            <person name="Rose M."/>
            <person name="Sadaie Y."/>
            <person name="Sato T."/>
            <person name="Scanlan E."/>
            <person name="Schleich S."/>
            <person name="Schroeter R."/>
            <person name="Scoffone F."/>
            <person name="Sekiguchi J."/>
            <person name="Sekowska A."/>
            <person name="Seror S.J."/>
            <person name="Serror P."/>
            <person name="Shin B.-S."/>
            <person name="Soldo B."/>
            <person name="Sorokin A."/>
            <person name="Tacconi E."/>
            <person name="Takagi T."/>
            <person name="Takahashi H."/>
            <person name="Takemaru K."/>
            <person name="Takeuchi M."/>
            <person name="Tamakoshi A."/>
            <person name="Tanaka T."/>
            <person name="Terpstra P."/>
            <person name="Tognoni A."/>
            <person name="Tosato V."/>
            <person name="Uchiyama S."/>
            <person name="Vandenbol M."/>
            <person name="Vannier F."/>
            <person name="Vassarotti A."/>
            <person name="Viari A."/>
            <person name="Wambutt R."/>
            <person name="Wedler E."/>
            <person name="Wedler H."/>
            <person name="Weitzenegger T."/>
            <person name="Winters P."/>
            <person name="Wipat A."/>
            <person name="Yamamoto H."/>
            <person name="Yamane K."/>
            <person name="Yasumoto K."/>
            <person name="Yata K."/>
            <person name="Yoshida K."/>
            <person name="Yoshikawa H.-F."/>
            <person name="Zumstein E."/>
            <person name="Yoshikawa H."/>
            <person name="Danchin A."/>
        </authorList>
    </citation>
    <scope>NUCLEOTIDE SEQUENCE [LARGE SCALE GENOMIC DNA]</scope>
    <source>
        <strain>168</strain>
    </source>
</reference>
<name>YVRE_BACSU</name>
<protein>
    <recommendedName>
        <fullName>Putative sugar lactone lactonase YvrE</fullName>
        <ecNumber>3.1.1.-</ecNumber>
    </recommendedName>
</protein>
<evidence type="ECO:0000250" key="1"/>
<evidence type="ECO:0000305" key="2"/>
<dbReference type="EC" id="3.1.1.-"/>
<dbReference type="EMBL" id="AJ223978">
    <property type="protein sequence ID" value="CAA11732.1"/>
    <property type="molecule type" value="Genomic_DNA"/>
</dbReference>
<dbReference type="EMBL" id="AL009126">
    <property type="protein sequence ID" value="CAB15310.1"/>
    <property type="molecule type" value="Genomic_DNA"/>
</dbReference>
<dbReference type="PIR" id="A70047">
    <property type="entry name" value="A70047"/>
</dbReference>
<dbReference type="RefSeq" id="NP_391200.1">
    <property type="nucleotide sequence ID" value="NC_000964.3"/>
</dbReference>
<dbReference type="RefSeq" id="WP_003228493.1">
    <property type="nucleotide sequence ID" value="NZ_OZ025638.1"/>
</dbReference>
<dbReference type="SMR" id="O34940"/>
<dbReference type="FunCoup" id="O34940">
    <property type="interactions" value="211"/>
</dbReference>
<dbReference type="STRING" id="224308.BSU33200"/>
<dbReference type="PaxDb" id="224308-BSU33200"/>
<dbReference type="EnsemblBacteria" id="CAB15310">
    <property type="protein sequence ID" value="CAB15310"/>
    <property type="gene ID" value="BSU_33200"/>
</dbReference>
<dbReference type="GeneID" id="935979"/>
<dbReference type="KEGG" id="bsu:BSU33200"/>
<dbReference type="PATRIC" id="fig|224308.179.peg.3601"/>
<dbReference type="eggNOG" id="COG3386">
    <property type="taxonomic scope" value="Bacteria"/>
</dbReference>
<dbReference type="InParanoid" id="O34940"/>
<dbReference type="OrthoDB" id="2633250at2"/>
<dbReference type="PhylomeDB" id="O34940"/>
<dbReference type="BioCyc" id="BSUB:BSU33200-MONOMER"/>
<dbReference type="Proteomes" id="UP000001570">
    <property type="component" value="Chromosome"/>
</dbReference>
<dbReference type="GO" id="GO:0005737">
    <property type="term" value="C:cytoplasm"/>
    <property type="evidence" value="ECO:0007669"/>
    <property type="project" value="UniProtKB-SubCell"/>
</dbReference>
<dbReference type="GO" id="GO:0005509">
    <property type="term" value="F:calcium ion binding"/>
    <property type="evidence" value="ECO:0000318"/>
    <property type="project" value="GO_Central"/>
</dbReference>
<dbReference type="GO" id="GO:0004341">
    <property type="term" value="F:gluconolactonase activity"/>
    <property type="evidence" value="ECO:0000318"/>
    <property type="project" value="GO_Central"/>
</dbReference>
<dbReference type="GO" id="GO:0019853">
    <property type="term" value="P:L-ascorbic acid biosynthetic process"/>
    <property type="evidence" value="ECO:0000318"/>
    <property type="project" value="GO_Central"/>
</dbReference>
<dbReference type="Gene3D" id="2.120.10.30">
    <property type="entry name" value="TolB, C-terminal domain"/>
    <property type="match status" value="1"/>
</dbReference>
<dbReference type="InterPro" id="IPR011042">
    <property type="entry name" value="6-blade_b-propeller_TolB-like"/>
</dbReference>
<dbReference type="InterPro" id="IPR013658">
    <property type="entry name" value="SGL"/>
</dbReference>
<dbReference type="InterPro" id="IPR005511">
    <property type="entry name" value="SMP-30"/>
</dbReference>
<dbReference type="PANTHER" id="PTHR10907">
    <property type="entry name" value="REGUCALCIN"/>
    <property type="match status" value="1"/>
</dbReference>
<dbReference type="PANTHER" id="PTHR10907:SF47">
    <property type="entry name" value="REGUCALCIN"/>
    <property type="match status" value="1"/>
</dbReference>
<dbReference type="Pfam" id="PF08450">
    <property type="entry name" value="SGL"/>
    <property type="match status" value="1"/>
</dbReference>
<dbReference type="PRINTS" id="PR01790">
    <property type="entry name" value="SMP30FAMILY"/>
</dbReference>
<dbReference type="SUPFAM" id="SSF63829">
    <property type="entry name" value="Calcium-dependent phosphotriesterase"/>
    <property type="match status" value="1"/>
</dbReference>
<sequence length="292" mass="33204">MDAVLEADTRAVIGEGPLWDEENGRLYWVDILGSELHIFDPEEKINRSIKFKSFVTALAKYSKDELIMTMKDGFYLYHLRDDSLEKIKQPKDMHESLRFNDAKCDPYGRLWAGTTSMEGEQKQASLYRLNLDGSLVKIKDQVSTSNGLDWDRERNLMYYIDTPTQEIVRYSYDPQSGDVSNPEPVYRFDQSDGLPDGMTIDQNGMLWVALFGGSRVVHIDPFQKKEINSISVPAKYVTCCAFGGRDLKTLYITTATEQMTEKERYEQPHAGGLFSAQLETGGYQPVPFAGDV</sequence>
<gene>
    <name type="primary">yvrE</name>
    <name type="ordered locus">BSU33200</name>
</gene>
<proteinExistence type="inferred from homology"/>
<comment type="cofactor">
    <cofactor evidence="1">
        <name>a divalent metal cation</name>
        <dbReference type="ChEBI" id="CHEBI:60240"/>
    </cofactor>
    <text evidence="1">Binds 1 divalent metal cation per subunit.</text>
</comment>
<comment type="subcellular location">
    <subcellularLocation>
        <location evidence="2">Cytoplasm</location>
    </subcellularLocation>
</comment>
<comment type="similarity">
    <text evidence="2">Belongs to the SMP-30/CGR1 family.</text>
</comment>
<feature type="chain" id="PRO_0000173053" description="Putative sugar lactone lactonase YvrE">
    <location>
        <begin position="1"/>
        <end position="292"/>
    </location>
</feature>
<feature type="binding site" evidence="1">
    <location>
        <position position="15"/>
    </location>
    <ligand>
        <name>a divalent metal cation</name>
        <dbReference type="ChEBI" id="CHEBI:60240"/>
    </ligand>
</feature>
<feature type="binding site" evidence="1">
    <location>
        <position position="146"/>
    </location>
    <ligand>
        <name>a divalent metal cation</name>
        <dbReference type="ChEBI" id="CHEBI:60240"/>
    </ligand>
</feature>
<feature type="binding site" evidence="1">
    <location>
        <position position="196"/>
    </location>
    <ligand>
        <name>a divalent metal cation</name>
        <dbReference type="ChEBI" id="CHEBI:60240"/>
    </ligand>
</feature>